<protein>
    <recommendedName>
        <fullName evidence="1">tRNA N6-adenosine threonylcarbamoyltransferase</fullName>
        <ecNumber evidence="1">2.3.1.234</ecNumber>
    </recommendedName>
    <alternativeName>
        <fullName evidence="1">N6-L-threonylcarbamoyladenine synthase</fullName>
        <shortName evidence="1">t(6)A synthase</shortName>
    </alternativeName>
    <alternativeName>
        <fullName evidence="1">t(6)A37 threonylcarbamoyladenosine biosynthesis protein TsaD</fullName>
    </alternativeName>
    <alternativeName>
        <fullName evidence="1">tRNA threonylcarbamoyladenosine biosynthesis protein TsaD</fullName>
    </alternativeName>
</protein>
<organism>
    <name type="scientific">Nitratidesulfovibrio vulgaris (strain ATCC 29579 / DSM 644 / CCUG 34227 / NCIMB 8303 / VKM B-1760 / Hildenborough)</name>
    <name type="common">Desulfovibrio vulgaris</name>
    <dbReference type="NCBI Taxonomy" id="882"/>
    <lineage>
        <taxon>Bacteria</taxon>
        <taxon>Pseudomonadati</taxon>
        <taxon>Thermodesulfobacteriota</taxon>
        <taxon>Desulfovibrionia</taxon>
        <taxon>Desulfovibrionales</taxon>
        <taxon>Desulfovibrionaceae</taxon>
        <taxon>Nitratidesulfovibrio</taxon>
    </lineage>
</organism>
<dbReference type="EC" id="2.3.1.234" evidence="1"/>
<dbReference type="EMBL" id="AE017285">
    <property type="protein sequence ID" value="AAS96316.1"/>
    <property type="molecule type" value="Genomic_DNA"/>
</dbReference>
<dbReference type="RefSeq" id="WP_010939126.1">
    <property type="nucleotide sequence ID" value="NC_002937.3"/>
</dbReference>
<dbReference type="RefSeq" id="YP_011057.1">
    <property type="nucleotide sequence ID" value="NC_002937.3"/>
</dbReference>
<dbReference type="SMR" id="Q72B00"/>
<dbReference type="IntAct" id="Q72B00">
    <property type="interactions" value="1"/>
</dbReference>
<dbReference type="STRING" id="882.DVU_1840"/>
<dbReference type="PaxDb" id="882-DVU_1840"/>
<dbReference type="EnsemblBacteria" id="AAS96316">
    <property type="protein sequence ID" value="AAS96316"/>
    <property type="gene ID" value="DVU_1840"/>
</dbReference>
<dbReference type="KEGG" id="dvu:DVU_1840"/>
<dbReference type="eggNOG" id="COG0533">
    <property type="taxonomic scope" value="Bacteria"/>
</dbReference>
<dbReference type="HOGENOM" id="CLU_023208_0_2_7"/>
<dbReference type="OrthoDB" id="9806197at2"/>
<dbReference type="PhylomeDB" id="Q72B00"/>
<dbReference type="Proteomes" id="UP000002194">
    <property type="component" value="Chromosome"/>
</dbReference>
<dbReference type="GO" id="GO:0005737">
    <property type="term" value="C:cytoplasm"/>
    <property type="evidence" value="ECO:0007669"/>
    <property type="project" value="UniProtKB-SubCell"/>
</dbReference>
<dbReference type="GO" id="GO:0005506">
    <property type="term" value="F:iron ion binding"/>
    <property type="evidence" value="ECO:0007669"/>
    <property type="project" value="UniProtKB-UniRule"/>
</dbReference>
<dbReference type="GO" id="GO:0061711">
    <property type="term" value="F:N(6)-L-threonylcarbamoyladenine synthase activity"/>
    <property type="evidence" value="ECO:0007669"/>
    <property type="project" value="UniProtKB-EC"/>
</dbReference>
<dbReference type="GO" id="GO:0002949">
    <property type="term" value="P:tRNA threonylcarbamoyladenosine modification"/>
    <property type="evidence" value="ECO:0007669"/>
    <property type="project" value="UniProtKB-UniRule"/>
</dbReference>
<dbReference type="CDD" id="cd24133">
    <property type="entry name" value="ASKHA_NBD_TsaD_bac"/>
    <property type="match status" value="1"/>
</dbReference>
<dbReference type="FunFam" id="3.30.420.40:FF:000012">
    <property type="entry name" value="tRNA N6-adenosine threonylcarbamoyltransferase"/>
    <property type="match status" value="1"/>
</dbReference>
<dbReference type="Gene3D" id="3.30.420.40">
    <property type="match status" value="2"/>
</dbReference>
<dbReference type="HAMAP" id="MF_01445">
    <property type="entry name" value="TsaD"/>
    <property type="match status" value="1"/>
</dbReference>
<dbReference type="InterPro" id="IPR043129">
    <property type="entry name" value="ATPase_NBD"/>
</dbReference>
<dbReference type="InterPro" id="IPR000905">
    <property type="entry name" value="Gcp-like_dom"/>
</dbReference>
<dbReference type="InterPro" id="IPR017861">
    <property type="entry name" value="KAE1/TsaD"/>
</dbReference>
<dbReference type="InterPro" id="IPR017860">
    <property type="entry name" value="Peptidase_M22_CS"/>
</dbReference>
<dbReference type="InterPro" id="IPR022450">
    <property type="entry name" value="TsaD"/>
</dbReference>
<dbReference type="NCBIfam" id="TIGR00329">
    <property type="entry name" value="gcp_kae1"/>
    <property type="match status" value="1"/>
</dbReference>
<dbReference type="NCBIfam" id="TIGR03723">
    <property type="entry name" value="T6A_TsaD_YgjD"/>
    <property type="match status" value="1"/>
</dbReference>
<dbReference type="PANTHER" id="PTHR11735">
    <property type="entry name" value="TRNA N6-ADENOSINE THREONYLCARBAMOYLTRANSFERASE"/>
    <property type="match status" value="1"/>
</dbReference>
<dbReference type="PANTHER" id="PTHR11735:SF6">
    <property type="entry name" value="TRNA N6-ADENOSINE THREONYLCARBAMOYLTRANSFERASE, MITOCHONDRIAL"/>
    <property type="match status" value="1"/>
</dbReference>
<dbReference type="Pfam" id="PF00814">
    <property type="entry name" value="TsaD"/>
    <property type="match status" value="1"/>
</dbReference>
<dbReference type="PRINTS" id="PR00789">
    <property type="entry name" value="OSIALOPTASE"/>
</dbReference>
<dbReference type="SUPFAM" id="SSF53067">
    <property type="entry name" value="Actin-like ATPase domain"/>
    <property type="match status" value="1"/>
</dbReference>
<dbReference type="PROSITE" id="PS01016">
    <property type="entry name" value="GLYCOPROTEASE"/>
    <property type="match status" value="1"/>
</dbReference>
<sequence length="361" mass="38156">MLCIGIETSCDETGLALVRDGRLVHAVMSSQADIHALFGGVVPEIASREHYRLIGPLYDLLLREAGVGPTELDAVAVARGPGLLGSLLVGMAFAKGLALGFDIPLVGVNHLHAHLLAAGLERELVFPALGLLVSGGHTHIYRIESPVSFRLLGRTLDDAAGEAYDKVAKMLRLPYPGGRILDQQGRRGIADPRLFPRPYTDNDNLDFSFSGLKTAVQTHLSRHPELVPSPDAAQAVAGGHDAPEGLRNMCASFNEAVAETLCIKLGRALDGDDGVGVRALIVAGGVAANSYVREHTARLAVSRGLELIVPSPPLCTDNGSMIAYAGWLLRQGGLSHSLDLEAVPRGRAIPDDYRQGPAGCS</sequence>
<keyword id="KW-0012">Acyltransferase</keyword>
<keyword id="KW-0963">Cytoplasm</keyword>
<keyword id="KW-0408">Iron</keyword>
<keyword id="KW-0479">Metal-binding</keyword>
<keyword id="KW-1185">Reference proteome</keyword>
<keyword id="KW-0808">Transferase</keyword>
<keyword id="KW-0819">tRNA processing</keyword>
<gene>
    <name evidence="1" type="primary">tsaD</name>
    <name type="synonym">gcp</name>
    <name type="ordered locus">DVU_1840</name>
</gene>
<feature type="chain" id="PRO_0000303349" description="tRNA N6-adenosine threonylcarbamoyltransferase">
    <location>
        <begin position="1"/>
        <end position="361"/>
    </location>
</feature>
<feature type="binding site" evidence="1">
    <location>
        <position position="110"/>
    </location>
    <ligand>
        <name>Fe cation</name>
        <dbReference type="ChEBI" id="CHEBI:24875"/>
    </ligand>
</feature>
<feature type="binding site" evidence="1">
    <location>
        <position position="114"/>
    </location>
    <ligand>
        <name>Fe cation</name>
        <dbReference type="ChEBI" id="CHEBI:24875"/>
    </ligand>
</feature>
<feature type="binding site" evidence="1">
    <location>
        <begin position="132"/>
        <end position="136"/>
    </location>
    <ligand>
        <name>substrate</name>
    </ligand>
</feature>
<feature type="binding site" evidence="1">
    <location>
        <position position="165"/>
    </location>
    <ligand>
        <name>substrate</name>
    </ligand>
</feature>
<feature type="binding site" evidence="1">
    <location>
        <position position="178"/>
    </location>
    <ligand>
        <name>substrate</name>
    </ligand>
</feature>
<feature type="binding site" evidence="1">
    <location>
        <position position="182"/>
    </location>
    <ligand>
        <name>substrate</name>
    </ligand>
</feature>
<feature type="binding site" evidence="1">
    <location>
        <position position="289"/>
    </location>
    <ligand>
        <name>substrate</name>
    </ligand>
</feature>
<feature type="binding site" evidence="1">
    <location>
        <position position="317"/>
    </location>
    <ligand>
        <name>Fe cation</name>
        <dbReference type="ChEBI" id="CHEBI:24875"/>
    </ligand>
</feature>
<accession>Q72B00</accession>
<reference key="1">
    <citation type="journal article" date="2004" name="Nat. Biotechnol.">
        <title>The genome sequence of the anaerobic, sulfate-reducing bacterium Desulfovibrio vulgaris Hildenborough.</title>
        <authorList>
            <person name="Heidelberg J.F."/>
            <person name="Seshadri R."/>
            <person name="Haveman S.A."/>
            <person name="Hemme C.L."/>
            <person name="Paulsen I.T."/>
            <person name="Kolonay J.F."/>
            <person name="Eisen J.A."/>
            <person name="Ward N.L."/>
            <person name="Methe B.A."/>
            <person name="Brinkac L.M."/>
            <person name="Daugherty S.C."/>
            <person name="DeBoy R.T."/>
            <person name="Dodson R.J."/>
            <person name="Durkin A.S."/>
            <person name="Madupu R."/>
            <person name="Nelson W.C."/>
            <person name="Sullivan S.A."/>
            <person name="Fouts D.E."/>
            <person name="Haft D.H."/>
            <person name="Selengut J."/>
            <person name="Peterson J.D."/>
            <person name="Davidsen T.M."/>
            <person name="Zafar N."/>
            <person name="Zhou L."/>
            <person name="Radune D."/>
            <person name="Dimitrov G."/>
            <person name="Hance M."/>
            <person name="Tran K."/>
            <person name="Khouri H.M."/>
            <person name="Gill J."/>
            <person name="Utterback T.R."/>
            <person name="Feldblyum T.V."/>
            <person name="Wall J.D."/>
            <person name="Voordouw G."/>
            <person name="Fraser C.M."/>
        </authorList>
    </citation>
    <scope>NUCLEOTIDE SEQUENCE [LARGE SCALE GENOMIC DNA]</scope>
    <source>
        <strain>ATCC 29579 / DSM 644 / CCUG 34227 / NCIMB 8303 / VKM B-1760 / Hildenborough</strain>
    </source>
</reference>
<evidence type="ECO:0000255" key="1">
    <source>
        <dbReference type="HAMAP-Rule" id="MF_01445"/>
    </source>
</evidence>
<proteinExistence type="evidence at protein level"/>
<comment type="function">
    <text evidence="1">Required for the formation of a threonylcarbamoyl group on adenosine at position 37 (t(6)A37) in tRNAs that read codons beginning with adenine. Is involved in the transfer of the threonylcarbamoyl moiety of threonylcarbamoyl-AMP (TC-AMP) to the N6 group of A37, together with TsaE and TsaB. TsaD likely plays a direct catalytic role in this reaction.</text>
</comment>
<comment type="catalytic activity">
    <reaction evidence="1">
        <text>L-threonylcarbamoyladenylate + adenosine(37) in tRNA = N(6)-L-threonylcarbamoyladenosine(37) in tRNA + AMP + H(+)</text>
        <dbReference type="Rhea" id="RHEA:37059"/>
        <dbReference type="Rhea" id="RHEA-COMP:10162"/>
        <dbReference type="Rhea" id="RHEA-COMP:10163"/>
        <dbReference type="ChEBI" id="CHEBI:15378"/>
        <dbReference type="ChEBI" id="CHEBI:73682"/>
        <dbReference type="ChEBI" id="CHEBI:74411"/>
        <dbReference type="ChEBI" id="CHEBI:74418"/>
        <dbReference type="ChEBI" id="CHEBI:456215"/>
        <dbReference type="EC" id="2.3.1.234"/>
    </reaction>
</comment>
<comment type="cofactor">
    <cofactor evidence="1">
        <name>Fe(2+)</name>
        <dbReference type="ChEBI" id="CHEBI:29033"/>
    </cofactor>
    <text evidence="1">Binds 1 Fe(2+) ion per subunit.</text>
</comment>
<comment type="interaction">
    <interactant intactId="EBI-10068484">
        <id>Q72B00</id>
    </interactant>
    <interactant intactId="EBI-10068478">
        <id>Q72DR5</id>
        <label>DVU_0864</label>
    </interactant>
    <organismsDiffer>false</organismsDiffer>
    <experiments>3</experiments>
</comment>
<comment type="subcellular location">
    <subcellularLocation>
        <location evidence="1">Cytoplasm</location>
    </subcellularLocation>
</comment>
<comment type="similarity">
    <text evidence="1">Belongs to the KAE1 / TsaD family.</text>
</comment>
<name>TSAD_NITV2</name>